<keyword id="KW-0150">Chloroplast</keyword>
<keyword id="KW-0934">Plastid</keyword>
<keyword id="KW-0687">Ribonucleoprotein</keyword>
<keyword id="KW-0689">Ribosomal protein</keyword>
<keyword id="KW-0694">RNA-binding</keyword>
<keyword id="KW-0699">rRNA-binding</keyword>
<accession>A6MMF5</accession>
<reference key="1">
    <citation type="journal article" date="2007" name="Mol. Phylogenet. Evol.">
        <title>Phylogenetic and evolutionary implications of complete chloroplast genome sequences of four early-diverging angiosperms: Buxus (Buxaceae), Chloranthus (Chloranthaceae), Dioscorea (Dioscoreaceae), and Illicium (Schisandraceae).</title>
        <authorList>
            <person name="Hansen D.R."/>
            <person name="Dastidar S.G."/>
            <person name="Cai Z."/>
            <person name="Penaflor C."/>
            <person name="Kuehl J.V."/>
            <person name="Boore J.L."/>
            <person name="Jansen R.K."/>
        </authorList>
    </citation>
    <scope>NUCLEOTIDE SEQUENCE [LARGE SCALE GENOMIC DNA]</scope>
</reference>
<dbReference type="EMBL" id="EF380352">
    <property type="protein sequence ID" value="ABQ43292.1"/>
    <property type="molecule type" value="Genomic_DNA"/>
</dbReference>
<dbReference type="RefSeq" id="YP_001294131.1">
    <property type="nucleotide sequence ID" value="NC_009598.1"/>
</dbReference>
<dbReference type="SMR" id="A6MMF5"/>
<dbReference type="GeneID" id="5236548"/>
<dbReference type="GO" id="GO:0009507">
    <property type="term" value="C:chloroplast"/>
    <property type="evidence" value="ECO:0007669"/>
    <property type="project" value="UniProtKB-SubCell"/>
</dbReference>
<dbReference type="GO" id="GO:1990904">
    <property type="term" value="C:ribonucleoprotein complex"/>
    <property type="evidence" value="ECO:0007669"/>
    <property type="project" value="UniProtKB-KW"/>
</dbReference>
<dbReference type="GO" id="GO:0005840">
    <property type="term" value="C:ribosome"/>
    <property type="evidence" value="ECO:0007669"/>
    <property type="project" value="UniProtKB-KW"/>
</dbReference>
<dbReference type="GO" id="GO:0019843">
    <property type="term" value="F:rRNA binding"/>
    <property type="evidence" value="ECO:0007669"/>
    <property type="project" value="UniProtKB-UniRule"/>
</dbReference>
<dbReference type="GO" id="GO:0003735">
    <property type="term" value="F:structural constituent of ribosome"/>
    <property type="evidence" value="ECO:0007669"/>
    <property type="project" value="InterPro"/>
</dbReference>
<dbReference type="GO" id="GO:0006412">
    <property type="term" value="P:translation"/>
    <property type="evidence" value="ECO:0007669"/>
    <property type="project" value="UniProtKB-UniRule"/>
</dbReference>
<dbReference type="FunFam" id="3.30.420.80:FF:000003">
    <property type="entry name" value="30S ribosomal protein S11, chloroplastic"/>
    <property type="match status" value="1"/>
</dbReference>
<dbReference type="Gene3D" id="3.30.420.80">
    <property type="entry name" value="Ribosomal protein S11"/>
    <property type="match status" value="1"/>
</dbReference>
<dbReference type="HAMAP" id="MF_01310">
    <property type="entry name" value="Ribosomal_uS11"/>
    <property type="match status" value="1"/>
</dbReference>
<dbReference type="InterPro" id="IPR001971">
    <property type="entry name" value="Ribosomal_uS11"/>
</dbReference>
<dbReference type="InterPro" id="IPR019981">
    <property type="entry name" value="Ribosomal_uS11_bac-type"/>
</dbReference>
<dbReference type="InterPro" id="IPR018102">
    <property type="entry name" value="Ribosomal_uS11_CS"/>
</dbReference>
<dbReference type="InterPro" id="IPR036967">
    <property type="entry name" value="Ribosomal_uS11_sf"/>
</dbReference>
<dbReference type="NCBIfam" id="NF003698">
    <property type="entry name" value="PRK05309.1"/>
    <property type="match status" value="1"/>
</dbReference>
<dbReference type="NCBIfam" id="TIGR03632">
    <property type="entry name" value="uS11_bact"/>
    <property type="match status" value="1"/>
</dbReference>
<dbReference type="PANTHER" id="PTHR11759">
    <property type="entry name" value="40S RIBOSOMAL PROTEIN S14/30S RIBOSOMAL PROTEIN S11"/>
    <property type="match status" value="1"/>
</dbReference>
<dbReference type="Pfam" id="PF00411">
    <property type="entry name" value="Ribosomal_S11"/>
    <property type="match status" value="1"/>
</dbReference>
<dbReference type="PIRSF" id="PIRSF002131">
    <property type="entry name" value="Ribosomal_S11"/>
    <property type="match status" value="1"/>
</dbReference>
<dbReference type="SUPFAM" id="SSF53137">
    <property type="entry name" value="Translational machinery components"/>
    <property type="match status" value="1"/>
</dbReference>
<dbReference type="PROSITE" id="PS00054">
    <property type="entry name" value="RIBOSOMAL_S11"/>
    <property type="match status" value="1"/>
</dbReference>
<sequence>MTKPIPRIGSRKNGRISSRKNGRRIPKGVIHVQASFNNTIVTVTDVRGRVVSWSSAGTSGFRGTRRGTPFAAQTAAGNAIRTVVDQGMQRAEVMIKGPGLGRDAALRAIRRSGLLLSFVRDVTPMPHNGCRPPKKRRV</sequence>
<evidence type="ECO:0000255" key="1">
    <source>
        <dbReference type="HAMAP-Rule" id="MF_01310"/>
    </source>
</evidence>
<evidence type="ECO:0000256" key="2">
    <source>
        <dbReference type="SAM" id="MobiDB-lite"/>
    </source>
</evidence>
<evidence type="ECO:0000305" key="3"/>
<name>RR11_CHLSC</name>
<feature type="chain" id="PRO_0000323358" description="Small ribosomal subunit protein uS11c">
    <location>
        <begin position="1"/>
        <end position="138"/>
    </location>
</feature>
<feature type="region of interest" description="Disordered" evidence="2">
    <location>
        <begin position="1"/>
        <end position="24"/>
    </location>
</feature>
<feature type="compositionally biased region" description="Basic residues" evidence="2">
    <location>
        <begin position="9"/>
        <end position="24"/>
    </location>
</feature>
<comment type="subunit">
    <text evidence="1">Part of the 30S ribosomal subunit.</text>
</comment>
<comment type="subcellular location">
    <subcellularLocation>
        <location>Plastid</location>
        <location>Chloroplast</location>
    </subcellularLocation>
</comment>
<comment type="similarity">
    <text evidence="1">Belongs to the universal ribosomal protein uS11 family.</text>
</comment>
<organism>
    <name type="scientific">Chloranthus spicatus</name>
    <name type="common">Chulantree</name>
    <name type="synonym">Nigrina spicata</name>
    <dbReference type="NCBI Taxonomy" id="13006"/>
    <lineage>
        <taxon>Eukaryota</taxon>
        <taxon>Viridiplantae</taxon>
        <taxon>Streptophyta</taxon>
        <taxon>Embryophyta</taxon>
        <taxon>Tracheophyta</taxon>
        <taxon>Spermatophyta</taxon>
        <taxon>Magnoliopsida</taxon>
        <taxon>Chloranthales</taxon>
        <taxon>Chloranthaceae</taxon>
        <taxon>Chloranthus</taxon>
    </lineage>
</organism>
<geneLocation type="chloroplast"/>
<proteinExistence type="inferred from homology"/>
<gene>
    <name evidence="1" type="primary">rps11</name>
</gene>
<protein>
    <recommendedName>
        <fullName evidence="1">Small ribosomal subunit protein uS11c</fullName>
    </recommendedName>
    <alternativeName>
        <fullName evidence="3">30S ribosomal protein S11, chloroplastic</fullName>
    </alternativeName>
</protein>